<keyword id="KW-0223">Dioxygenase</keyword>
<keyword id="KW-0408">Iron</keyword>
<keyword id="KW-0479">Metal-binding</keyword>
<keyword id="KW-0560">Oxidoreductase</keyword>
<keyword id="KW-0585">Phenylalanine catabolism</keyword>
<keyword id="KW-0828">Tyrosine catabolism</keyword>
<gene>
    <name evidence="1" type="primary">hmgA</name>
    <name type="ordered locus">XOO3845</name>
</gene>
<accession>Q2NYM7</accession>
<sequence>MHNPQHYMTGFGNEFATEAVAGSLPVGQNSPQRVAHGLYAEQLSGTAFTAPRGENRRSWLYRIRPAAVHGRFSLIEQSRLHNDFGGGPVPPDQMRWSPLPLPATPTDFVDGLYTMAGNGSPEAMTGVAVHLYAANASMHGRFFYNADGELLLVPQLGRLRVCTELGVLELEPQQIGVIPRGVRFRVELLDSAARGYVCENFGGLLRLPDLGPIGANGLANPRDFETPRAAFEQRDGAFELVAKFQGHLWRADIDHSPLDVVAWHGNYAPYRYDLRRFNTIGSISFDHPDPSIFTVLTSPSDTHGTANMDFAIFPPRWLVAQHTFRPPWFHRNVASEFMGLVHGVYDAKAEGFAPGGASLHNCMSGHGPDAATFDKASQADLTRPDVIAETMAFMFETRAVLRPTQQALSAAHRQADYQQCWSGLRAAFQHPPAKNTTSVLR</sequence>
<name>HGD_XANOM</name>
<feature type="chain" id="PRO_1000019545" description="Homogentisate 1,2-dioxygenase">
    <location>
        <begin position="1"/>
        <end position="441"/>
    </location>
</feature>
<feature type="active site" description="Proton acceptor" evidence="1">
    <location>
        <position position="287"/>
    </location>
</feature>
<feature type="binding site" evidence="1">
    <location>
        <position position="330"/>
    </location>
    <ligand>
        <name>Fe cation</name>
        <dbReference type="ChEBI" id="CHEBI:24875"/>
    </ligand>
</feature>
<feature type="binding site" evidence="1">
    <location>
        <position position="336"/>
    </location>
    <ligand>
        <name>Fe cation</name>
        <dbReference type="ChEBI" id="CHEBI:24875"/>
    </ligand>
</feature>
<feature type="binding site" evidence="1">
    <location>
        <position position="345"/>
    </location>
    <ligand>
        <name>homogentisate</name>
        <dbReference type="ChEBI" id="CHEBI:16169"/>
    </ligand>
</feature>
<feature type="binding site" evidence="1">
    <location>
        <position position="366"/>
    </location>
    <ligand>
        <name>Fe cation</name>
        <dbReference type="ChEBI" id="CHEBI:24875"/>
    </ligand>
</feature>
<feature type="binding site" evidence="1">
    <location>
        <position position="366"/>
    </location>
    <ligand>
        <name>homogentisate</name>
        <dbReference type="ChEBI" id="CHEBI:16169"/>
    </ligand>
</feature>
<reference key="1">
    <citation type="journal article" date="2005" name="Jpn. Agric. Res. Q.">
        <title>Genome sequence of Xanthomonas oryzae pv. oryzae suggests contribution of large numbers of effector genes and insertion sequences to its race diversity.</title>
        <authorList>
            <person name="Ochiai H."/>
            <person name="Inoue Y."/>
            <person name="Takeya M."/>
            <person name="Sasaki A."/>
            <person name="Kaku H."/>
        </authorList>
    </citation>
    <scope>NUCLEOTIDE SEQUENCE [LARGE SCALE GENOMIC DNA]</scope>
    <source>
        <strain>MAFF 311018</strain>
    </source>
</reference>
<dbReference type="EC" id="1.13.11.5" evidence="1"/>
<dbReference type="EMBL" id="AP008229">
    <property type="protein sequence ID" value="BAE70600.1"/>
    <property type="molecule type" value="Genomic_DNA"/>
</dbReference>
<dbReference type="RefSeq" id="WP_011409528.1">
    <property type="nucleotide sequence ID" value="NC_007705.1"/>
</dbReference>
<dbReference type="SMR" id="Q2NYM7"/>
<dbReference type="KEGG" id="xom:XOO3845"/>
<dbReference type="HOGENOM" id="CLU_027174_0_0_6"/>
<dbReference type="UniPathway" id="UPA00139">
    <property type="reaction ID" value="UER00339"/>
</dbReference>
<dbReference type="GO" id="GO:0005737">
    <property type="term" value="C:cytoplasm"/>
    <property type="evidence" value="ECO:0007669"/>
    <property type="project" value="TreeGrafter"/>
</dbReference>
<dbReference type="GO" id="GO:0004411">
    <property type="term" value="F:homogentisate 1,2-dioxygenase activity"/>
    <property type="evidence" value="ECO:0007669"/>
    <property type="project" value="UniProtKB-UniRule"/>
</dbReference>
<dbReference type="GO" id="GO:0005506">
    <property type="term" value="F:iron ion binding"/>
    <property type="evidence" value="ECO:0007669"/>
    <property type="project" value="UniProtKB-UniRule"/>
</dbReference>
<dbReference type="GO" id="GO:0006559">
    <property type="term" value="P:L-phenylalanine catabolic process"/>
    <property type="evidence" value="ECO:0007669"/>
    <property type="project" value="UniProtKB-UniRule"/>
</dbReference>
<dbReference type="GO" id="GO:0006572">
    <property type="term" value="P:tyrosine catabolic process"/>
    <property type="evidence" value="ECO:0007669"/>
    <property type="project" value="UniProtKB-UniRule"/>
</dbReference>
<dbReference type="CDD" id="cd07000">
    <property type="entry name" value="cupin_HGO_N"/>
    <property type="match status" value="1"/>
</dbReference>
<dbReference type="FunFam" id="2.60.120.10:FF:000053">
    <property type="entry name" value="Homogentisate 1,2-dioxygenase"/>
    <property type="match status" value="1"/>
</dbReference>
<dbReference type="Gene3D" id="2.60.120.10">
    <property type="entry name" value="Jelly Rolls"/>
    <property type="match status" value="1"/>
</dbReference>
<dbReference type="HAMAP" id="MF_00334">
    <property type="entry name" value="Homogentis_dioxygen"/>
    <property type="match status" value="1"/>
</dbReference>
<dbReference type="InterPro" id="IPR046451">
    <property type="entry name" value="HgmA_C"/>
</dbReference>
<dbReference type="InterPro" id="IPR046452">
    <property type="entry name" value="HgmA_N"/>
</dbReference>
<dbReference type="InterPro" id="IPR005708">
    <property type="entry name" value="Homogentis_dOase"/>
</dbReference>
<dbReference type="InterPro" id="IPR022950">
    <property type="entry name" value="Homogentis_dOase_bac"/>
</dbReference>
<dbReference type="InterPro" id="IPR014710">
    <property type="entry name" value="RmlC-like_jellyroll"/>
</dbReference>
<dbReference type="InterPro" id="IPR011051">
    <property type="entry name" value="RmlC_Cupin_sf"/>
</dbReference>
<dbReference type="NCBIfam" id="TIGR01015">
    <property type="entry name" value="hmgA"/>
    <property type="match status" value="1"/>
</dbReference>
<dbReference type="PANTHER" id="PTHR11056">
    <property type="entry name" value="HOMOGENTISATE 1,2-DIOXYGENASE"/>
    <property type="match status" value="1"/>
</dbReference>
<dbReference type="PANTHER" id="PTHR11056:SF0">
    <property type="entry name" value="HOMOGENTISATE 1,2-DIOXYGENASE"/>
    <property type="match status" value="1"/>
</dbReference>
<dbReference type="Pfam" id="PF04209">
    <property type="entry name" value="HgmA_C"/>
    <property type="match status" value="1"/>
</dbReference>
<dbReference type="Pfam" id="PF20510">
    <property type="entry name" value="HgmA_N"/>
    <property type="match status" value="1"/>
</dbReference>
<dbReference type="SUPFAM" id="SSF51182">
    <property type="entry name" value="RmlC-like cupins"/>
    <property type="match status" value="1"/>
</dbReference>
<evidence type="ECO:0000255" key="1">
    <source>
        <dbReference type="HAMAP-Rule" id="MF_00334"/>
    </source>
</evidence>
<proteinExistence type="inferred from homology"/>
<protein>
    <recommendedName>
        <fullName evidence="1">Homogentisate 1,2-dioxygenase</fullName>
        <shortName evidence="1">HGDO</shortName>
        <ecNumber evidence="1">1.13.11.5</ecNumber>
    </recommendedName>
    <alternativeName>
        <fullName evidence="1">Homogentisate oxygenase</fullName>
    </alternativeName>
    <alternativeName>
        <fullName evidence="1">Homogentisic acid oxidase</fullName>
    </alternativeName>
    <alternativeName>
        <fullName evidence="1">Homogentisicase</fullName>
    </alternativeName>
</protein>
<comment type="function">
    <text evidence="1">Involved in the catabolism of homogentisate (2,5-dihydroxyphenylacetate or 2,5-OH-PhAc), a central intermediate in the degradation of phenylalanine and tyrosine. Catalyzes the oxidative ring cleavage of the aromatic ring of homogentisate to yield maleylacetoacetate.</text>
</comment>
<comment type="catalytic activity">
    <reaction evidence="1">
        <text>homogentisate + O2 = 4-maleylacetoacetate + H(+)</text>
        <dbReference type="Rhea" id="RHEA:15449"/>
        <dbReference type="ChEBI" id="CHEBI:15378"/>
        <dbReference type="ChEBI" id="CHEBI:15379"/>
        <dbReference type="ChEBI" id="CHEBI:16169"/>
        <dbReference type="ChEBI" id="CHEBI:17105"/>
        <dbReference type="EC" id="1.13.11.5"/>
    </reaction>
</comment>
<comment type="cofactor">
    <cofactor evidence="1">
        <name>Fe cation</name>
        <dbReference type="ChEBI" id="CHEBI:24875"/>
    </cofactor>
</comment>
<comment type="pathway">
    <text evidence="1">Amino-acid degradation; L-phenylalanine degradation; acetoacetate and fumarate from L-phenylalanine: step 4/6.</text>
</comment>
<comment type="subunit">
    <text evidence="1">Hexamer; dimer of trimers.</text>
</comment>
<comment type="similarity">
    <text evidence="1">Belongs to the homogentisate dioxygenase family.</text>
</comment>
<organism>
    <name type="scientific">Xanthomonas oryzae pv. oryzae (strain MAFF 311018)</name>
    <dbReference type="NCBI Taxonomy" id="342109"/>
    <lineage>
        <taxon>Bacteria</taxon>
        <taxon>Pseudomonadati</taxon>
        <taxon>Pseudomonadota</taxon>
        <taxon>Gammaproteobacteria</taxon>
        <taxon>Lysobacterales</taxon>
        <taxon>Lysobacteraceae</taxon>
        <taxon>Xanthomonas</taxon>
    </lineage>
</organism>